<name>RS3_NEIMA</name>
<feature type="chain" id="PRO_0000130160" description="Small ribosomal subunit protein uS3">
    <location>
        <begin position="1"/>
        <end position="230"/>
    </location>
</feature>
<feature type="domain" description="KH type-2" evidence="1">
    <location>
        <begin position="39"/>
        <end position="107"/>
    </location>
</feature>
<feature type="region of interest" description="Disordered" evidence="2">
    <location>
        <begin position="210"/>
        <end position="230"/>
    </location>
</feature>
<organism>
    <name type="scientific">Neisseria meningitidis serogroup A / serotype 4A (strain DSM 15465 / Z2491)</name>
    <dbReference type="NCBI Taxonomy" id="122587"/>
    <lineage>
        <taxon>Bacteria</taxon>
        <taxon>Pseudomonadati</taxon>
        <taxon>Pseudomonadota</taxon>
        <taxon>Betaproteobacteria</taxon>
        <taxon>Neisseriales</taxon>
        <taxon>Neisseriaceae</taxon>
        <taxon>Neisseria</taxon>
    </lineage>
</organism>
<proteinExistence type="inferred from homology"/>
<evidence type="ECO:0000255" key="1">
    <source>
        <dbReference type="HAMAP-Rule" id="MF_01309"/>
    </source>
</evidence>
<evidence type="ECO:0000256" key="2">
    <source>
        <dbReference type="SAM" id="MobiDB-lite"/>
    </source>
</evidence>
<evidence type="ECO:0000305" key="3"/>
<dbReference type="EMBL" id="AL157959">
    <property type="protein sequence ID" value="CAM07441.1"/>
    <property type="molecule type" value="Genomic_DNA"/>
</dbReference>
<dbReference type="RefSeq" id="WP_002215427.1">
    <property type="nucleotide sequence ID" value="NC_003116.1"/>
</dbReference>
<dbReference type="SMR" id="P66550"/>
<dbReference type="EnsemblBacteria" id="CAM07441">
    <property type="protein sequence ID" value="CAM07441"/>
    <property type="gene ID" value="NMA0123"/>
</dbReference>
<dbReference type="GeneID" id="93387223"/>
<dbReference type="KEGG" id="nma:NMA0123"/>
<dbReference type="HOGENOM" id="CLU_058591_0_2_4"/>
<dbReference type="Proteomes" id="UP000000626">
    <property type="component" value="Chromosome"/>
</dbReference>
<dbReference type="GO" id="GO:0022627">
    <property type="term" value="C:cytosolic small ribosomal subunit"/>
    <property type="evidence" value="ECO:0007669"/>
    <property type="project" value="TreeGrafter"/>
</dbReference>
<dbReference type="GO" id="GO:0003729">
    <property type="term" value="F:mRNA binding"/>
    <property type="evidence" value="ECO:0007669"/>
    <property type="project" value="UniProtKB-UniRule"/>
</dbReference>
<dbReference type="GO" id="GO:0019843">
    <property type="term" value="F:rRNA binding"/>
    <property type="evidence" value="ECO:0007669"/>
    <property type="project" value="UniProtKB-UniRule"/>
</dbReference>
<dbReference type="GO" id="GO:0003735">
    <property type="term" value="F:structural constituent of ribosome"/>
    <property type="evidence" value="ECO:0007669"/>
    <property type="project" value="InterPro"/>
</dbReference>
<dbReference type="GO" id="GO:0006412">
    <property type="term" value="P:translation"/>
    <property type="evidence" value="ECO:0007669"/>
    <property type="project" value="UniProtKB-UniRule"/>
</dbReference>
<dbReference type="CDD" id="cd02412">
    <property type="entry name" value="KH-II_30S_S3"/>
    <property type="match status" value="1"/>
</dbReference>
<dbReference type="FunFam" id="3.30.1140.32:FF:000006">
    <property type="entry name" value="30S ribosomal protein S3"/>
    <property type="match status" value="1"/>
</dbReference>
<dbReference type="FunFam" id="3.30.300.20:FF:000001">
    <property type="entry name" value="30S ribosomal protein S3"/>
    <property type="match status" value="1"/>
</dbReference>
<dbReference type="Gene3D" id="3.30.300.20">
    <property type="match status" value="1"/>
</dbReference>
<dbReference type="Gene3D" id="3.30.1140.32">
    <property type="entry name" value="Ribosomal protein S3, C-terminal domain"/>
    <property type="match status" value="1"/>
</dbReference>
<dbReference type="HAMAP" id="MF_01309_B">
    <property type="entry name" value="Ribosomal_uS3_B"/>
    <property type="match status" value="1"/>
</dbReference>
<dbReference type="InterPro" id="IPR004087">
    <property type="entry name" value="KH_dom"/>
</dbReference>
<dbReference type="InterPro" id="IPR015946">
    <property type="entry name" value="KH_dom-like_a/b"/>
</dbReference>
<dbReference type="InterPro" id="IPR004044">
    <property type="entry name" value="KH_dom_type_2"/>
</dbReference>
<dbReference type="InterPro" id="IPR009019">
    <property type="entry name" value="KH_sf_prok-type"/>
</dbReference>
<dbReference type="InterPro" id="IPR036419">
    <property type="entry name" value="Ribosomal_S3_C_sf"/>
</dbReference>
<dbReference type="InterPro" id="IPR005704">
    <property type="entry name" value="Ribosomal_uS3_bac-typ"/>
</dbReference>
<dbReference type="InterPro" id="IPR001351">
    <property type="entry name" value="Ribosomal_uS3_C"/>
</dbReference>
<dbReference type="InterPro" id="IPR018280">
    <property type="entry name" value="Ribosomal_uS3_CS"/>
</dbReference>
<dbReference type="NCBIfam" id="TIGR01009">
    <property type="entry name" value="rpsC_bact"/>
    <property type="match status" value="1"/>
</dbReference>
<dbReference type="PANTHER" id="PTHR11760">
    <property type="entry name" value="30S/40S RIBOSOMAL PROTEIN S3"/>
    <property type="match status" value="1"/>
</dbReference>
<dbReference type="PANTHER" id="PTHR11760:SF19">
    <property type="entry name" value="SMALL RIBOSOMAL SUBUNIT PROTEIN US3C"/>
    <property type="match status" value="1"/>
</dbReference>
<dbReference type="Pfam" id="PF07650">
    <property type="entry name" value="KH_2"/>
    <property type="match status" value="1"/>
</dbReference>
<dbReference type="Pfam" id="PF00189">
    <property type="entry name" value="Ribosomal_S3_C"/>
    <property type="match status" value="1"/>
</dbReference>
<dbReference type="SMART" id="SM00322">
    <property type="entry name" value="KH"/>
    <property type="match status" value="1"/>
</dbReference>
<dbReference type="SUPFAM" id="SSF54814">
    <property type="entry name" value="Prokaryotic type KH domain (KH-domain type II)"/>
    <property type="match status" value="1"/>
</dbReference>
<dbReference type="SUPFAM" id="SSF54821">
    <property type="entry name" value="Ribosomal protein S3 C-terminal domain"/>
    <property type="match status" value="1"/>
</dbReference>
<dbReference type="PROSITE" id="PS50823">
    <property type="entry name" value="KH_TYPE_2"/>
    <property type="match status" value="1"/>
</dbReference>
<dbReference type="PROSITE" id="PS00548">
    <property type="entry name" value="RIBOSOMAL_S3"/>
    <property type="match status" value="1"/>
</dbReference>
<keyword id="KW-0687">Ribonucleoprotein</keyword>
<keyword id="KW-0689">Ribosomal protein</keyword>
<keyword id="KW-0694">RNA-binding</keyword>
<keyword id="KW-0699">rRNA-binding</keyword>
<reference key="1">
    <citation type="journal article" date="2000" name="Nature">
        <title>Complete DNA sequence of a serogroup A strain of Neisseria meningitidis Z2491.</title>
        <authorList>
            <person name="Parkhill J."/>
            <person name="Achtman M."/>
            <person name="James K.D."/>
            <person name="Bentley S.D."/>
            <person name="Churcher C.M."/>
            <person name="Klee S.R."/>
            <person name="Morelli G."/>
            <person name="Basham D."/>
            <person name="Brown D."/>
            <person name="Chillingworth T."/>
            <person name="Davies R.M."/>
            <person name="Davis P."/>
            <person name="Devlin K."/>
            <person name="Feltwell T."/>
            <person name="Hamlin N."/>
            <person name="Holroyd S."/>
            <person name="Jagels K."/>
            <person name="Leather S."/>
            <person name="Moule S."/>
            <person name="Mungall K.L."/>
            <person name="Quail M.A."/>
            <person name="Rajandream M.A."/>
            <person name="Rutherford K.M."/>
            <person name="Simmonds M."/>
            <person name="Skelton J."/>
            <person name="Whitehead S."/>
            <person name="Spratt B.G."/>
            <person name="Barrell B.G."/>
        </authorList>
    </citation>
    <scope>NUCLEOTIDE SEQUENCE [LARGE SCALE GENOMIC DNA]</scope>
    <source>
        <strain>DSM 15465 / Z2491</strain>
    </source>
</reference>
<accession>P66550</accession>
<accession>A1INY4</accession>
<accession>Q9JQX2</accession>
<comment type="function">
    <text evidence="1">Binds the lower part of the 30S subunit head. Binds mRNA in the 70S ribosome, positioning it for translation.</text>
</comment>
<comment type="subunit">
    <text evidence="1">Part of the 30S ribosomal subunit. Forms a tight complex with proteins S10 and S14.</text>
</comment>
<comment type="similarity">
    <text evidence="1">Belongs to the universal ribosomal protein uS3 family.</text>
</comment>
<protein>
    <recommendedName>
        <fullName evidence="1">Small ribosomal subunit protein uS3</fullName>
    </recommendedName>
    <alternativeName>
        <fullName evidence="3">30S ribosomal protein S3</fullName>
    </alternativeName>
</protein>
<gene>
    <name evidence="1" type="primary">rpsC</name>
    <name type="ordered locus">NMA0123</name>
</gene>
<sequence length="230" mass="25798">MGQKINPTGFRLAVTKDWASKWFAKSTDFSTVLKQDIDVRNYLRQKLANASVGRVVIERPAKSARITIHSARPGVVIGKKGEDIEVLKRDLQVLMGVPVHVNIEEIRRPELDAQIIADGIAQQLEKRVQFRRAMKRAMQNAMRSGAKGIKIMTSGRLNGADIARSEWYREGRVPLHTLRANVDYATSEAHTTYGVLGLKVWVYTEGNIKSSKPEHESKQRKAGRRNAAAN</sequence>